<proteinExistence type="inferred from homology"/>
<gene>
    <name evidence="1" type="primary">recO</name>
    <name type="ordered locus">MCCL_1218</name>
</gene>
<reference key="1">
    <citation type="journal article" date="2009" name="J. Bacteriol.">
        <title>Complete genome sequence of Macrococcus caseolyticus strain JCSCS5402, reflecting the ancestral genome of the human-pathogenic staphylococci.</title>
        <authorList>
            <person name="Baba T."/>
            <person name="Kuwahara-Arai K."/>
            <person name="Uchiyama I."/>
            <person name="Takeuchi F."/>
            <person name="Ito T."/>
            <person name="Hiramatsu K."/>
        </authorList>
    </citation>
    <scope>NUCLEOTIDE SEQUENCE [LARGE SCALE GENOMIC DNA]</scope>
    <source>
        <strain>JCSC5402</strain>
    </source>
</reference>
<keyword id="KW-0227">DNA damage</keyword>
<keyword id="KW-0233">DNA recombination</keyword>
<keyword id="KW-0234">DNA repair</keyword>
<keyword id="KW-1185">Reference proteome</keyword>
<protein>
    <recommendedName>
        <fullName evidence="1">DNA repair protein RecO</fullName>
    </recommendedName>
    <alternativeName>
        <fullName evidence="1">Recombination protein O</fullName>
    </alternativeName>
</protein>
<dbReference type="EMBL" id="AP009484">
    <property type="protein sequence ID" value="BAH17925.1"/>
    <property type="molecule type" value="Genomic_DNA"/>
</dbReference>
<dbReference type="RefSeq" id="WP_012657123.1">
    <property type="nucleotide sequence ID" value="NC_011999.1"/>
</dbReference>
<dbReference type="SMR" id="B9E6V7"/>
<dbReference type="STRING" id="458233.MCCL_1218"/>
<dbReference type="KEGG" id="mcl:MCCL_1218"/>
<dbReference type="eggNOG" id="COG1381">
    <property type="taxonomic scope" value="Bacteria"/>
</dbReference>
<dbReference type="HOGENOM" id="CLU_066632_4_0_9"/>
<dbReference type="OrthoDB" id="9797083at2"/>
<dbReference type="Proteomes" id="UP000001383">
    <property type="component" value="Chromosome"/>
</dbReference>
<dbReference type="GO" id="GO:0043590">
    <property type="term" value="C:bacterial nucleoid"/>
    <property type="evidence" value="ECO:0007669"/>
    <property type="project" value="TreeGrafter"/>
</dbReference>
<dbReference type="GO" id="GO:0006310">
    <property type="term" value="P:DNA recombination"/>
    <property type="evidence" value="ECO:0007669"/>
    <property type="project" value="UniProtKB-UniRule"/>
</dbReference>
<dbReference type="GO" id="GO:0006302">
    <property type="term" value="P:double-strand break repair"/>
    <property type="evidence" value="ECO:0007669"/>
    <property type="project" value="TreeGrafter"/>
</dbReference>
<dbReference type="Gene3D" id="2.40.50.140">
    <property type="entry name" value="Nucleic acid-binding proteins"/>
    <property type="match status" value="1"/>
</dbReference>
<dbReference type="Gene3D" id="1.20.1440.120">
    <property type="entry name" value="Recombination protein O, C-terminal domain"/>
    <property type="match status" value="1"/>
</dbReference>
<dbReference type="HAMAP" id="MF_00201">
    <property type="entry name" value="RecO"/>
    <property type="match status" value="1"/>
</dbReference>
<dbReference type="InterPro" id="IPR037278">
    <property type="entry name" value="ARFGAP/RecO"/>
</dbReference>
<dbReference type="InterPro" id="IPR022572">
    <property type="entry name" value="DNA_rep/recomb_RecO_N"/>
</dbReference>
<dbReference type="InterPro" id="IPR012340">
    <property type="entry name" value="NA-bd_OB-fold"/>
</dbReference>
<dbReference type="InterPro" id="IPR003717">
    <property type="entry name" value="RecO"/>
</dbReference>
<dbReference type="InterPro" id="IPR042242">
    <property type="entry name" value="RecO_C"/>
</dbReference>
<dbReference type="NCBIfam" id="TIGR00613">
    <property type="entry name" value="reco"/>
    <property type="match status" value="1"/>
</dbReference>
<dbReference type="PANTHER" id="PTHR33991">
    <property type="entry name" value="DNA REPAIR PROTEIN RECO"/>
    <property type="match status" value="1"/>
</dbReference>
<dbReference type="PANTHER" id="PTHR33991:SF1">
    <property type="entry name" value="DNA REPAIR PROTEIN RECO"/>
    <property type="match status" value="1"/>
</dbReference>
<dbReference type="Pfam" id="PF02565">
    <property type="entry name" value="RecO_C"/>
    <property type="match status" value="1"/>
</dbReference>
<dbReference type="Pfam" id="PF11967">
    <property type="entry name" value="RecO_N"/>
    <property type="match status" value="1"/>
</dbReference>
<dbReference type="SUPFAM" id="SSF57863">
    <property type="entry name" value="ArfGap/RecO-like zinc finger"/>
    <property type="match status" value="1"/>
</dbReference>
<dbReference type="SUPFAM" id="SSF50249">
    <property type="entry name" value="Nucleic acid-binding proteins"/>
    <property type="match status" value="1"/>
</dbReference>
<organism>
    <name type="scientific">Macrococcus caseolyticus (strain JCSC5402)</name>
    <name type="common">Macrococcoides caseolyticum</name>
    <dbReference type="NCBI Taxonomy" id="458233"/>
    <lineage>
        <taxon>Bacteria</taxon>
        <taxon>Bacillati</taxon>
        <taxon>Bacillota</taxon>
        <taxon>Bacilli</taxon>
        <taxon>Bacillales</taxon>
        <taxon>Staphylococcaceae</taxon>
        <taxon>Macrococcoides</taxon>
    </lineage>
</organism>
<comment type="function">
    <text evidence="1">Involved in DNA repair and RecF pathway recombination.</text>
</comment>
<comment type="similarity">
    <text evidence="1">Belongs to the RecO family.</text>
</comment>
<feature type="chain" id="PRO_1000193393" description="DNA repair protein RecO">
    <location>
        <begin position="1"/>
        <end position="251"/>
    </location>
</feature>
<sequence length="251" mass="29073">MLKKAVGIVIRRVAYGDNHLIITFLNEAGVKVALMARNARKSTKYGSGLDLFYENLFIFSQFKGMGTLSSVDTINSHYEIREDIYVMTYAQYVVELIDRALEEDETNPYAYQLLKVALTHMERSDKARLIALLVSIKCMPLYGYVPNFKYSTYDGNMTHKDFIAYSFQFNSVVTQEALIEDPHAIPMTNKSLYMLYLLSEVPIESLSSINIEQSLIDEMETLVYKMYDEFIGVFIKSRKILEQMRRLDNYK</sequence>
<name>RECO_MACCJ</name>
<evidence type="ECO:0000255" key="1">
    <source>
        <dbReference type="HAMAP-Rule" id="MF_00201"/>
    </source>
</evidence>
<accession>B9E6V7</accession>